<reference key="1">
    <citation type="submission" date="1998-07" db="EMBL/GenBank/DDBJ databases">
        <title>S-adenosylhomocysteine hydrolase.</title>
        <authorList>
            <person name="Radomski N."/>
            <person name="Plessmann U."/>
            <person name="Mohl C."/>
            <person name="Weber K."/>
            <person name="Dreyer C."/>
        </authorList>
    </citation>
    <scope>NUCLEOTIDE SEQUENCE [MRNA]</scope>
    <source>
        <tissue>Ovary</tissue>
    </source>
</reference>
<reference key="2">
    <citation type="submission" date="2004-06" db="EMBL/GenBank/DDBJ databases">
        <authorList>
            <consortium name="NIH - Xenopus Gene Collection (XGC) project"/>
        </authorList>
    </citation>
    <scope>NUCLEOTIDE SEQUENCE [LARGE SCALE MRNA]</scope>
    <source>
        <tissue>Kidney</tissue>
    </source>
</reference>
<keyword id="KW-0186">Copper</keyword>
<keyword id="KW-0963">Cytoplasm</keyword>
<keyword id="KW-0378">Hydrolase</keyword>
<keyword id="KW-0520">NAD</keyword>
<keyword id="KW-0554">One-carbon metabolism</keyword>
<keyword id="KW-1185">Reference proteome</keyword>
<sequence length="433" mass="47745">MSDKLSYKVADISLADWGRKAIEIAENEMPGLMKMREMYSESKPLKGARIAGCLHMTLQTAVLIETLTAIGAEVQWSSCNIFSTQDHAAAAIAKTGVPVYAWKGETDEEYIWCIEQTIYFKDGKPLNMILDDGGDLTNLVHTKYPQLLKGIKGISEETTTGVHNLYKMKSSGTLQVPAINVNDSVTKSKFDNLYGCRESLIDGIKRATDVMIAGKVAVVAGYGDVGKGCAQALRAFGARVLITEIDPINALQAAMEGYEVTTMDEASKEGNIFVTTTGCADIVEGRHFENMKDDSIVCNIGHFDVELDVKWLNDNAAKKINIKPQVDRYLLKNGRHIILLAEGRLVNLGCAMGHPSFVMSNSFTNQVMAQIELWTNTDKYPVGVYFLPKKLDEAVAAAHLDKLGVKLTKLTDKQAKYLGLDKEGPFKPDHYRY</sequence>
<gene>
    <name type="primary">ahcy-b</name>
    <name type="synonym">ahcy2</name>
    <name type="synonym">sahh</name>
</gene>
<comment type="function">
    <text evidence="1 3">Catalyzes the hydrolysis of S-adenosyl-L-homocysteine to form adenosine and homocysteine (By similarity). Binds copper ions (By similarity).</text>
</comment>
<comment type="catalytic activity">
    <reaction evidence="1">
        <text>S-adenosyl-L-homocysteine + H2O = L-homocysteine + adenosine</text>
        <dbReference type="Rhea" id="RHEA:21708"/>
        <dbReference type="ChEBI" id="CHEBI:15377"/>
        <dbReference type="ChEBI" id="CHEBI:16335"/>
        <dbReference type="ChEBI" id="CHEBI:57856"/>
        <dbReference type="ChEBI" id="CHEBI:58199"/>
        <dbReference type="EC" id="3.13.2.1"/>
    </reaction>
    <physiologicalReaction direction="left-to-right" evidence="1">
        <dbReference type="Rhea" id="RHEA:21709"/>
    </physiologicalReaction>
</comment>
<comment type="cofactor">
    <cofactor evidence="1">
        <name>NAD(+)</name>
        <dbReference type="ChEBI" id="CHEBI:57540"/>
    </cofactor>
    <text evidence="1">Binds 1 NAD(+) per subunit.</text>
</comment>
<comment type="pathway">
    <text>Amino-acid biosynthesis; L-homocysteine biosynthesis; L-homocysteine from S-adenosyl-L-homocysteine: step 1/1.</text>
</comment>
<comment type="subunit">
    <text evidence="1">Homotetramer.</text>
</comment>
<comment type="subcellular location">
    <subcellularLocation>
        <location evidence="2">Cytoplasm</location>
    </subcellularLocation>
</comment>
<comment type="similarity">
    <text evidence="4">Belongs to the adenosylhomocysteinase family.</text>
</comment>
<feature type="chain" id="PRO_0000116907" description="Adenosylhomocysteinase B">
    <location>
        <begin position="1"/>
        <end position="433"/>
    </location>
</feature>
<feature type="region of interest" description="NAD binding" evidence="1">
    <location>
        <begin position="184"/>
        <end position="351"/>
    </location>
</feature>
<feature type="binding site" evidence="1">
    <location>
        <position position="57"/>
    </location>
    <ligand>
        <name>substrate</name>
    </ligand>
</feature>
<feature type="binding site" evidence="1">
    <location>
        <position position="132"/>
    </location>
    <ligand>
        <name>substrate</name>
    </ligand>
</feature>
<feature type="binding site" evidence="1">
    <location>
        <position position="157"/>
    </location>
    <ligand>
        <name>substrate</name>
    </ligand>
</feature>
<feature type="binding site" evidence="1">
    <location>
        <position position="187"/>
    </location>
    <ligand>
        <name>substrate</name>
    </ligand>
</feature>
<feature type="binding site" evidence="1">
    <location>
        <position position="191"/>
    </location>
    <ligand>
        <name>substrate</name>
    </ligand>
</feature>
<dbReference type="EC" id="3.13.2.1" evidence="1"/>
<dbReference type="EMBL" id="AJ007835">
    <property type="protein sequence ID" value="CAA07706.1"/>
    <property type="molecule type" value="mRNA"/>
</dbReference>
<dbReference type="EMBL" id="BC074224">
    <property type="protein sequence ID" value="AAH74224.1"/>
    <property type="molecule type" value="mRNA"/>
</dbReference>
<dbReference type="RefSeq" id="NP_001089040.1">
    <property type="nucleotide sequence ID" value="NM_001095571.1"/>
</dbReference>
<dbReference type="SMR" id="O93477"/>
<dbReference type="DNASU" id="503682"/>
<dbReference type="GeneID" id="503682"/>
<dbReference type="KEGG" id="xla:503682"/>
<dbReference type="AGR" id="Xenbase:XB-GENE-950023"/>
<dbReference type="CTD" id="503682"/>
<dbReference type="Xenbase" id="XB-GENE-950023">
    <property type="gene designation" value="ahcy.S"/>
</dbReference>
<dbReference type="OMA" id="EEYWWAT"/>
<dbReference type="OrthoDB" id="10007170at2759"/>
<dbReference type="UniPathway" id="UPA00314">
    <property type="reaction ID" value="UER00076"/>
</dbReference>
<dbReference type="Proteomes" id="UP000186698">
    <property type="component" value="Chromosome 9_10S"/>
</dbReference>
<dbReference type="Bgee" id="503682">
    <property type="expression patterns" value="Expressed in ovary and 20 other cell types or tissues"/>
</dbReference>
<dbReference type="GO" id="GO:0005829">
    <property type="term" value="C:cytosol"/>
    <property type="evidence" value="ECO:0000318"/>
    <property type="project" value="GO_Central"/>
</dbReference>
<dbReference type="GO" id="GO:0004013">
    <property type="term" value="F:adenosylhomocysteinase activity"/>
    <property type="evidence" value="ECO:0000250"/>
    <property type="project" value="UniProtKB"/>
</dbReference>
<dbReference type="GO" id="GO:0051287">
    <property type="term" value="F:NAD binding"/>
    <property type="evidence" value="ECO:0000250"/>
    <property type="project" value="UniProtKB"/>
</dbReference>
<dbReference type="GO" id="GO:0006730">
    <property type="term" value="P:one-carbon metabolic process"/>
    <property type="evidence" value="ECO:0007669"/>
    <property type="project" value="UniProtKB-KW"/>
</dbReference>
<dbReference type="GO" id="GO:0033353">
    <property type="term" value="P:S-adenosylmethionine cycle"/>
    <property type="evidence" value="ECO:0000318"/>
    <property type="project" value="GO_Central"/>
</dbReference>
<dbReference type="CDD" id="cd00401">
    <property type="entry name" value="SAHH"/>
    <property type="match status" value="1"/>
</dbReference>
<dbReference type="FunFam" id="3.40.50.1480:FF:000004">
    <property type="entry name" value="Adenosylhomocysteinase"/>
    <property type="match status" value="1"/>
</dbReference>
<dbReference type="FunFam" id="3.40.50.1480:FF:000007">
    <property type="entry name" value="Adenosylhomocysteinase"/>
    <property type="match status" value="1"/>
</dbReference>
<dbReference type="FunFam" id="3.40.50.720:FF:000004">
    <property type="entry name" value="Adenosylhomocysteinase"/>
    <property type="match status" value="1"/>
</dbReference>
<dbReference type="Gene3D" id="3.40.50.1480">
    <property type="entry name" value="Adenosylhomocysteinase-like"/>
    <property type="match status" value="2"/>
</dbReference>
<dbReference type="Gene3D" id="3.40.50.720">
    <property type="entry name" value="NAD(P)-binding Rossmann-like Domain"/>
    <property type="match status" value="1"/>
</dbReference>
<dbReference type="HAMAP" id="MF_00563">
    <property type="entry name" value="AdoHcyase"/>
    <property type="match status" value="1"/>
</dbReference>
<dbReference type="InterPro" id="IPR042172">
    <property type="entry name" value="Adenosylhomocyst_ase-like_sf"/>
</dbReference>
<dbReference type="InterPro" id="IPR000043">
    <property type="entry name" value="Adenosylhomocysteinase-like"/>
</dbReference>
<dbReference type="InterPro" id="IPR015878">
    <property type="entry name" value="Ado_hCys_hydrolase_NAD-bd"/>
</dbReference>
<dbReference type="InterPro" id="IPR036291">
    <property type="entry name" value="NAD(P)-bd_dom_sf"/>
</dbReference>
<dbReference type="InterPro" id="IPR020082">
    <property type="entry name" value="S-Ado-L-homoCys_hydrolase_CS"/>
</dbReference>
<dbReference type="NCBIfam" id="TIGR00936">
    <property type="entry name" value="ahcY"/>
    <property type="match status" value="1"/>
</dbReference>
<dbReference type="NCBIfam" id="NF004005">
    <property type="entry name" value="PRK05476.2-3"/>
    <property type="match status" value="1"/>
</dbReference>
<dbReference type="PANTHER" id="PTHR23420">
    <property type="entry name" value="ADENOSYLHOMOCYSTEINASE"/>
    <property type="match status" value="1"/>
</dbReference>
<dbReference type="PANTHER" id="PTHR23420:SF0">
    <property type="entry name" value="ADENOSYLHOMOCYSTEINASE"/>
    <property type="match status" value="1"/>
</dbReference>
<dbReference type="Pfam" id="PF05221">
    <property type="entry name" value="AdoHcyase"/>
    <property type="match status" value="1"/>
</dbReference>
<dbReference type="Pfam" id="PF00670">
    <property type="entry name" value="AdoHcyase_NAD"/>
    <property type="match status" value="1"/>
</dbReference>
<dbReference type="PIRSF" id="PIRSF001109">
    <property type="entry name" value="Ad_hcy_hydrolase"/>
    <property type="match status" value="1"/>
</dbReference>
<dbReference type="SMART" id="SM00996">
    <property type="entry name" value="AdoHcyase"/>
    <property type="match status" value="1"/>
</dbReference>
<dbReference type="SMART" id="SM00997">
    <property type="entry name" value="AdoHcyase_NAD"/>
    <property type="match status" value="1"/>
</dbReference>
<dbReference type="SUPFAM" id="SSF52283">
    <property type="entry name" value="Formate/glycerate dehydrogenase catalytic domain-like"/>
    <property type="match status" value="1"/>
</dbReference>
<dbReference type="SUPFAM" id="SSF51735">
    <property type="entry name" value="NAD(P)-binding Rossmann-fold domains"/>
    <property type="match status" value="1"/>
</dbReference>
<dbReference type="PROSITE" id="PS00738">
    <property type="entry name" value="ADOHCYASE_1"/>
    <property type="match status" value="1"/>
</dbReference>
<dbReference type="PROSITE" id="PS00739">
    <property type="entry name" value="ADOHCYASE_2"/>
    <property type="match status" value="1"/>
</dbReference>
<organism>
    <name type="scientific">Xenopus laevis</name>
    <name type="common">African clawed frog</name>
    <dbReference type="NCBI Taxonomy" id="8355"/>
    <lineage>
        <taxon>Eukaryota</taxon>
        <taxon>Metazoa</taxon>
        <taxon>Chordata</taxon>
        <taxon>Craniata</taxon>
        <taxon>Vertebrata</taxon>
        <taxon>Euteleostomi</taxon>
        <taxon>Amphibia</taxon>
        <taxon>Batrachia</taxon>
        <taxon>Anura</taxon>
        <taxon>Pipoidea</taxon>
        <taxon>Pipidae</taxon>
        <taxon>Xenopodinae</taxon>
        <taxon>Xenopus</taxon>
        <taxon>Xenopus</taxon>
    </lineage>
</organism>
<evidence type="ECO:0000250" key="1">
    <source>
        <dbReference type="UniProtKB" id="P10760"/>
    </source>
</evidence>
<evidence type="ECO:0000250" key="2">
    <source>
        <dbReference type="UniProtKB" id="P23526"/>
    </source>
</evidence>
<evidence type="ECO:0000250" key="3">
    <source>
        <dbReference type="UniProtKB" id="P50247"/>
    </source>
</evidence>
<evidence type="ECO:0000305" key="4"/>
<accession>O93477</accession>
<accession>Q6DKD5</accession>
<protein>
    <recommendedName>
        <fullName>Adenosylhomocysteinase B</fullName>
        <shortName>AdoHcyase B</shortName>
        <ecNumber evidence="1">3.13.2.1</ecNumber>
    </recommendedName>
    <alternativeName>
        <fullName>S-adenosyl-L-homocysteine hydrolase B</fullName>
    </alternativeName>
</protein>
<name>SAHHB_XENLA</name>
<proteinExistence type="evidence at transcript level"/>